<sequence>MAEQANQPTVLQKFGGQFHLGSSFSEGVRARNICPSVSSYDRRFTTRSYMTQGLVNGGINVPMMSSSPIFANAPAEKGGKNFMIDFLMGGVSAAVSKTAAAPIERVKLLIQNQDEMIKAGRLSEPYKGIGDCFGRTIKDEGFASLWRGNTANVIRYFPTQALNFAFKDYFKRLFNFKKDKDGYWKWFGGNLASGGAAGASSLFFVYSLDYARTRLANDAKAAKGGGERQFNGLVDVYRKTLKSDGIAGLYRGFNISCVGIIVYRGLYFGMYDSLKPVVLTGSLQDNFFASFALGWLITNGAGLASYPIDTVRRRMMMTSGEAVKYKSSMDAFSQILKNEGAKSLFKGAGANILRAIAGAGVLSGYDQLQILFFGKKYGSGGA</sequence>
<name>ADT_ORYSJ</name>
<proteinExistence type="evidence at transcript level"/>
<keyword id="KW-0050">Antiport</keyword>
<keyword id="KW-0472">Membrane</keyword>
<keyword id="KW-0496">Mitochondrion</keyword>
<keyword id="KW-0999">Mitochondrion inner membrane</keyword>
<keyword id="KW-1185">Reference proteome</keyword>
<keyword id="KW-0677">Repeat</keyword>
<keyword id="KW-0809">Transit peptide</keyword>
<keyword id="KW-0812">Transmembrane</keyword>
<keyword id="KW-1133">Transmembrane helix</keyword>
<keyword id="KW-0813">Transport</keyword>
<evidence type="ECO:0000250" key="1">
    <source>
        <dbReference type="UniProtKB" id="G2QNH0"/>
    </source>
</evidence>
<evidence type="ECO:0000250" key="2">
    <source>
        <dbReference type="UniProtKB" id="P02722"/>
    </source>
</evidence>
<evidence type="ECO:0000250" key="3">
    <source>
        <dbReference type="UniProtKB" id="P12235"/>
    </source>
</evidence>
<evidence type="ECO:0000250" key="4">
    <source>
        <dbReference type="UniProtKB" id="P18239"/>
    </source>
</evidence>
<evidence type="ECO:0000250" key="5">
    <source>
        <dbReference type="UniProtKB" id="P31167"/>
    </source>
</evidence>
<evidence type="ECO:0000250" key="6">
    <source>
        <dbReference type="UniProtKB" id="P48962"/>
    </source>
</evidence>
<evidence type="ECO:0000255" key="7"/>
<evidence type="ECO:0000305" key="8"/>
<comment type="function">
    <text evidence="1 6">ADP:ATP antiporter that mediates import of ADP into the mitochondrial matrix for ATP synthesis, and export of ATP out to fuel the cell (By similarity). Cycles between the cytoplasmic-open state (c-state) and the matrix-open state (m-state): operates by the alternating access mechanism with a single substrate-binding site intermittently exposed to either the cytosolic (c-state) or matrix (m-state) side of the inner mitochondrial membrane (By similarity).</text>
</comment>
<comment type="catalytic activity">
    <reaction evidence="6">
        <text>ADP(in) + ATP(out) = ADP(out) + ATP(in)</text>
        <dbReference type="Rhea" id="RHEA:34999"/>
        <dbReference type="ChEBI" id="CHEBI:30616"/>
        <dbReference type="ChEBI" id="CHEBI:456216"/>
    </reaction>
    <physiologicalReaction direction="left-to-right" evidence="6">
        <dbReference type="Rhea" id="RHEA:35000"/>
    </physiologicalReaction>
</comment>
<comment type="activity regulation">
    <text evidence="1">The matrix-open state (m-state) is inhibited by the membrane-permeable bongkrekic acid (BKA). The cytoplasmic-open state (c-state) is inhibited by the membrane-impermeable toxic inhibitor carboxyatractyloside (CATR).</text>
</comment>
<comment type="subunit">
    <text evidence="1 2">Monomer.</text>
</comment>
<comment type="subcellular location">
    <subcellularLocation>
        <location evidence="5">Mitochondrion inner membrane</location>
        <topology evidence="7">Multi-pass membrane protein</topology>
    </subcellularLocation>
</comment>
<comment type="domain">
    <text evidence="4">The transmembrane helices are not perpendicular to the plane of the membrane, but cross the membrane at an angle. At least 2 of the odd-numbered transmembrane helices exhibit a sharp kink, due to the presence of a conserved proline residue.</text>
</comment>
<comment type="similarity">
    <text evidence="8">Belongs to the mitochondrial carrier (TC 2.A.29) family.</text>
</comment>
<dbReference type="EMBL" id="D12637">
    <property type="protein sequence ID" value="BAA02161.1"/>
    <property type="molecule type" value="mRNA"/>
</dbReference>
<dbReference type="EMBL" id="AP004098">
    <property type="protein sequence ID" value="BAD12908.1"/>
    <property type="molecule type" value="Genomic_DNA"/>
</dbReference>
<dbReference type="EMBL" id="AP014958">
    <property type="protein sequence ID" value="BAS80629.1"/>
    <property type="molecule type" value="Genomic_DNA"/>
</dbReference>
<dbReference type="PIR" id="S33630">
    <property type="entry name" value="S33630"/>
</dbReference>
<dbReference type="RefSeq" id="XP_015625645.1">
    <property type="nucleotide sequence ID" value="XM_015770159.1"/>
</dbReference>
<dbReference type="SMR" id="P31691"/>
<dbReference type="FunCoup" id="P31691">
    <property type="interactions" value="2396"/>
</dbReference>
<dbReference type="STRING" id="39947.P31691"/>
<dbReference type="PaxDb" id="39947-P31691"/>
<dbReference type="EnsemblPlants" id="Os02t0718900-01">
    <property type="protein sequence ID" value="Os02t0718900-01"/>
    <property type="gene ID" value="Os02g0718900"/>
</dbReference>
<dbReference type="EnsemblPlants" id="Os02t0718900-02">
    <property type="protein sequence ID" value="Os02t0718900-02"/>
    <property type="gene ID" value="Os02g0718900"/>
</dbReference>
<dbReference type="Gramene" id="Os02t0718900-01">
    <property type="protein sequence ID" value="Os02t0718900-01"/>
    <property type="gene ID" value="Os02g0718900"/>
</dbReference>
<dbReference type="Gramene" id="Os02t0718900-02">
    <property type="protein sequence ID" value="Os02t0718900-02"/>
    <property type="gene ID" value="Os02g0718900"/>
</dbReference>
<dbReference type="eggNOG" id="KOG0749">
    <property type="taxonomic scope" value="Eukaryota"/>
</dbReference>
<dbReference type="HOGENOM" id="CLU_015166_12_0_1"/>
<dbReference type="InParanoid" id="P31691"/>
<dbReference type="OMA" id="CFARTLK"/>
<dbReference type="OrthoDB" id="270584at2759"/>
<dbReference type="Proteomes" id="UP000000763">
    <property type="component" value="Chromosome 2"/>
</dbReference>
<dbReference type="Proteomes" id="UP000059680">
    <property type="component" value="Chromosome 2"/>
</dbReference>
<dbReference type="ExpressionAtlas" id="P31691">
    <property type="expression patterns" value="baseline and differential"/>
</dbReference>
<dbReference type="GO" id="GO:0005743">
    <property type="term" value="C:mitochondrial inner membrane"/>
    <property type="evidence" value="ECO:0007669"/>
    <property type="project" value="UniProtKB-SubCell"/>
</dbReference>
<dbReference type="GO" id="GO:0005471">
    <property type="term" value="F:ATP:ADP antiporter activity"/>
    <property type="evidence" value="ECO:0000318"/>
    <property type="project" value="GO_Central"/>
</dbReference>
<dbReference type="GO" id="GO:0140021">
    <property type="term" value="P:mitochondrial ADP transmembrane transport"/>
    <property type="evidence" value="ECO:0007669"/>
    <property type="project" value="InterPro"/>
</dbReference>
<dbReference type="GO" id="GO:1990544">
    <property type="term" value="P:mitochondrial ATP transmembrane transport"/>
    <property type="evidence" value="ECO:0007669"/>
    <property type="project" value="InterPro"/>
</dbReference>
<dbReference type="FunFam" id="1.50.40.10:FF:000001">
    <property type="entry name" value="ADP,ATP carrier protein, mitochondrial"/>
    <property type="match status" value="1"/>
</dbReference>
<dbReference type="Gene3D" id="1.50.40.10">
    <property type="entry name" value="Mitochondrial carrier domain"/>
    <property type="match status" value="1"/>
</dbReference>
<dbReference type="InterPro" id="IPR002113">
    <property type="entry name" value="ADT_euk_type"/>
</dbReference>
<dbReference type="InterPro" id="IPR002067">
    <property type="entry name" value="Mit_carrier"/>
</dbReference>
<dbReference type="InterPro" id="IPR018108">
    <property type="entry name" value="Mitochondrial_sb/sol_carrier"/>
</dbReference>
<dbReference type="InterPro" id="IPR023395">
    <property type="entry name" value="Mt_carrier_dom_sf"/>
</dbReference>
<dbReference type="PANTHER" id="PTHR45635">
    <property type="entry name" value="ADP,ATP CARRIER PROTEIN 1-RELATED-RELATED"/>
    <property type="match status" value="1"/>
</dbReference>
<dbReference type="PANTHER" id="PTHR45635:SF47">
    <property type="entry name" value="ADP,ATP CARRIER PROTEIN, MITOCHONDRIAL"/>
    <property type="match status" value="1"/>
</dbReference>
<dbReference type="Pfam" id="PF00153">
    <property type="entry name" value="Mito_carr"/>
    <property type="match status" value="3"/>
</dbReference>
<dbReference type="PRINTS" id="PR00927">
    <property type="entry name" value="ADPTRNSLCASE"/>
</dbReference>
<dbReference type="PRINTS" id="PR00926">
    <property type="entry name" value="MITOCARRIER"/>
</dbReference>
<dbReference type="SUPFAM" id="SSF103506">
    <property type="entry name" value="Mitochondrial carrier"/>
    <property type="match status" value="1"/>
</dbReference>
<dbReference type="PROSITE" id="PS50920">
    <property type="entry name" value="SOLCAR"/>
    <property type="match status" value="3"/>
</dbReference>
<gene>
    <name type="ordered locus">Os02g0718900</name>
    <name type="ordered locus">LOC_Os02g48720</name>
    <name type="ORF">OJ2056_H01.33</name>
</gene>
<accession>P31691</accession>
<accession>Q6ZGX0</accession>
<protein>
    <recommendedName>
        <fullName>ADP,ATP carrier protein, mitochondrial</fullName>
    </recommendedName>
    <alternativeName>
        <fullName>ADP/ATP translocase</fullName>
    </alternativeName>
    <alternativeName>
        <fullName>Adenine nucleotide translocator</fullName>
        <shortName>ANT</shortName>
    </alternativeName>
</protein>
<feature type="transit peptide" description="Mitochondrion" evidence="7">
    <location>
        <begin position="1"/>
        <end position="71"/>
    </location>
</feature>
<feature type="chain" id="PRO_0000019250" description="ADP,ATP carrier protein, mitochondrial">
    <location>
        <begin position="72"/>
        <end position="382"/>
    </location>
</feature>
<feature type="transmembrane region" description="Helical; Name=1" evidence="4">
    <location>
        <begin position="82"/>
        <end position="109"/>
    </location>
</feature>
<feature type="transmembrane region" description="Helical; Name=2" evidence="4">
    <location>
        <begin position="150"/>
        <end position="174"/>
    </location>
</feature>
<feature type="transmembrane region" description="Helical; Name=3" evidence="4">
    <location>
        <begin position="183"/>
        <end position="203"/>
    </location>
</feature>
<feature type="transmembrane region" description="Helical; Name=4" evidence="4">
    <location>
        <begin position="253"/>
        <end position="274"/>
    </location>
</feature>
<feature type="transmembrane region" description="Helical; Name=5" evidence="4">
    <location>
        <begin position="288"/>
        <end position="308"/>
    </location>
</feature>
<feature type="transmembrane region" description="Helical; Name=6" evidence="4">
    <location>
        <begin position="348"/>
        <end position="368"/>
    </location>
</feature>
<feature type="repeat" description="Solcar 1">
    <location>
        <begin position="80"/>
        <end position="173"/>
    </location>
</feature>
<feature type="repeat" description="Solcar 2">
    <location>
        <begin position="185"/>
        <end position="277"/>
    </location>
</feature>
<feature type="repeat" description="Solcar 3">
    <location>
        <begin position="285"/>
        <end position="371"/>
    </location>
</feature>
<feature type="region of interest" description="Important for transport activity" evidence="3">
    <location>
        <begin position="312"/>
        <end position="317"/>
    </location>
</feature>
<feature type="short sequence motif" description="Nucleotide carrier signature motif" evidence="2">
    <location>
        <begin position="312"/>
        <end position="317"/>
    </location>
</feature>
<feature type="binding site" evidence="2">
    <location>
        <position position="155"/>
    </location>
    <ligand>
        <name>ADP</name>
        <dbReference type="ChEBI" id="CHEBI:456216"/>
    </ligand>
</feature>
<feature type="binding site" evidence="2">
    <location>
        <position position="167"/>
    </location>
    <ligand>
        <name>ADP</name>
        <dbReference type="ChEBI" id="CHEBI:456216"/>
    </ligand>
</feature>
<feature type="binding site" evidence="2">
    <location>
        <position position="312"/>
    </location>
    <ligand>
        <name>ADP</name>
        <dbReference type="ChEBI" id="CHEBI:456216"/>
    </ligand>
</feature>
<organism>
    <name type="scientific">Oryza sativa subsp. japonica</name>
    <name type="common">Rice</name>
    <dbReference type="NCBI Taxonomy" id="39947"/>
    <lineage>
        <taxon>Eukaryota</taxon>
        <taxon>Viridiplantae</taxon>
        <taxon>Streptophyta</taxon>
        <taxon>Embryophyta</taxon>
        <taxon>Tracheophyta</taxon>
        <taxon>Spermatophyta</taxon>
        <taxon>Magnoliopsida</taxon>
        <taxon>Liliopsida</taxon>
        <taxon>Poales</taxon>
        <taxon>Poaceae</taxon>
        <taxon>BOP clade</taxon>
        <taxon>Oryzoideae</taxon>
        <taxon>Oryzeae</taxon>
        <taxon>Oryzinae</taxon>
        <taxon>Oryza</taxon>
        <taxon>Oryza sativa</taxon>
    </lineage>
</organism>
<reference key="1">
    <citation type="journal article" date="1993" name="Plant Mol. Biol.">
        <title>Isolation and characterization of a rice cDNA clone encoding ATP/ADP translocator.</title>
        <authorList>
            <person name="Hashimoto H."/>
            <person name="Uchimiya H."/>
            <person name="Kato A."/>
        </authorList>
    </citation>
    <scope>NUCLEOTIDE SEQUENCE [MRNA]</scope>
    <source>
        <strain>cv. Yamahoushi</strain>
    </source>
</reference>
<reference key="2">
    <citation type="journal article" date="2005" name="Nature">
        <title>The map-based sequence of the rice genome.</title>
        <authorList>
            <consortium name="International rice genome sequencing project (IRGSP)"/>
        </authorList>
    </citation>
    <scope>NUCLEOTIDE SEQUENCE [LARGE SCALE GENOMIC DNA]</scope>
    <source>
        <strain>cv. Nipponbare</strain>
    </source>
</reference>
<reference key="3">
    <citation type="journal article" date="2013" name="Rice">
        <title>Improvement of the Oryza sativa Nipponbare reference genome using next generation sequence and optical map data.</title>
        <authorList>
            <person name="Kawahara Y."/>
            <person name="de la Bastide M."/>
            <person name="Hamilton J.P."/>
            <person name="Kanamori H."/>
            <person name="McCombie W.R."/>
            <person name="Ouyang S."/>
            <person name="Schwartz D.C."/>
            <person name="Tanaka T."/>
            <person name="Wu J."/>
            <person name="Zhou S."/>
            <person name="Childs K.L."/>
            <person name="Davidson R.M."/>
            <person name="Lin H."/>
            <person name="Quesada-Ocampo L."/>
            <person name="Vaillancourt B."/>
            <person name="Sakai H."/>
            <person name="Lee S.S."/>
            <person name="Kim J."/>
            <person name="Numa H."/>
            <person name="Itoh T."/>
            <person name="Buell C.R."/>
            <person name="Matsumoto T."/>
        </authorList>
    </citation>
    <scope>GENOME REANNOTATION</scope>
    <source>
        <strain>cv. Nipponbare</strain>
    </source>
</reference>